<sequence length="75" mass="8159">MATGTRTSCYRRATSSLMARLARRPSSLTRFTASERRSRTWWTGSGCAGVSWRTQRLSTTVTRPASTTAATLSAG</sequence>
<keyword id="KW-0614">Plasmid</keyword>
<protein>
    <recommendedName>
        <fullName>Uncharacterized 8.2 kDa protein in mobL 3'region</fullName>
    </recommendedName>
    <alternativeName>
        <fullName>ORF 3</fullName>
    </alternativeName>
</protein>
<accession>P20087</accession>
<name>YML1_ACIFI</name>
<proteinExistence type="predicted"/>
<dbReference type="EMBL" id="X52699">
    <property type="protein sequence ID" value="CAA36928.1"/>
    <property type="molecule type" value="Genomic_DNA"/>
</dbReference>
<dbReference type="PIR" id="S12191">
    <property type="entry name" value="S12191"/>
</dbReference>
<dbReference type="SMR" id="P20087"/>
<organism>
    <name type="scientific">Acidithiobacillus ferridurans</name>
    <dbReference type="NCBI Taxonomy" id="1232575"/>
    <lineage>
        <taxon>Bacteria</taxon>
        <taxon>Pseudomonadati</taxon>
        <taxon>Pseudomonadota</taxon>
        <taxon>Acidithiobacillia</taxon>
        <taxon>Acidithiobacillales</taxon>
        <taxon>Acidithiobacillaceae</taxon>
        <taxon>Acidithiobacillus</taxon>
    </lineage>
</organism>
<feature type="chain" id="PRO_0000068504" description="Uncharacterized 8.2 kDa protein in mobL 3'region">
    <location>
        <begin position="1"/>
        <end position="75"/>
    </location>
</feature>
<geneLocation type="plasmid">
    <name>pTF1</name>
</geneLocation>
<reference key="1">
    <citation type="journal article" date="1990" name="Mol. Microbiol.">
        <title>The mobilization and origin of transfer regions of a Thiobacillus ferrooxidans plasmid: relatedness to plasmids RSF1010 and pSC101.</title>
        <authorList>
            <person name="Drolet M."/>
            <person name="Zanga P."/>
            <person name="Lau P.C.K."/>
        </authorList>
    </citation>
    <scope>NUCLEOTIDE SEQUENCE [GENOMIC DNA]</scope>
    <source>
        <strain>ATCC 33020 / DSM 29468 / JCM 18981 / 11Fe</strain>
    </source>
</reference>